<reference key="1">
    <citation type="journal article" date="2010" name="Environ. Microbiol.">
        <title>The genome of Syntrophomonas wolfei: new insights into syntrophic metabolism and biohydrogen production.</title>
        <authorList>
            <person name="Sieber J.R."/>
            <person name="Sims D.R."/>
            <person name="Han C."/>
            <person name="Kim E."/>
            <person name="Lykidis A."/>
            <person name="Lapidus A.L."/>
            <person name="McDonnald E."/>
            <person name="Rohlin L."/>
            <person name="Culley D.E."/>
            <person name="Gunsalus R."/>
            <person name="McInerney M.J."/>
        </authorList>
    </citation>
    <scope>NUCLEOTIDE SEQUENCE [LARGE SCALE GENOMIC DNA]</scope>
    <source>
        <strain>DSM 2245B / Goettingen</strain>
    </source>
</reference>
<accession>Q0AYP1</accession>
<proteinExistence type="inferred from homology"/>
<organism>
    <name type="scientific">Syntrophomonas wolfei subsp. wolfei (strain DSM 2245B / Goettingen)</name>
    <dbReference type="NCBI Taxonomy" id="335541"/>
    <lineage>
        <taxon>Bacteria</taxon>
        <taxon>Bacillati</taxon>
        <taxon>Bacillota</taxon>
        <taxon>Clostridia</taxon>
        <taxon>Eubacteriales</taxon>
        <taxon>Syntrophomonadaceae</taxon>
        <taxon>Syntrophomonas</taxon>
    </lineage>
</organism>
<keyword id="KW-0067">ATP-binding</keyword>
<keyword id="KW-0143">Chaperone</keyword>
<keyword id="KW-0963">Cytoplasm</keyword>
<keyword id="KW-0547">Nucleotide-binding</keyword>
<keyword id="KW-1185">Reference proteome</keyword>
<keyword id="KW-0346">Stress response</keyword>
<protein>
    <recommendedName>
        <fullName evidence="1">ATP-dependent protease ATPase subunit HslU</fullName>
    </recommendedName>
    <alternativeName>
        <fullName evidence="1">Unfoldase HslU</fullName>
    </alternativeName>
</protein>
<name>HSLU_SYNWW</name>
<evidence type="ECO:0000255" key="1">
    <source>
        <dbReference type="HAMAP-Rule" id="MF_00249"/>
    </source>
</evidence>
<comment type="function">
    <text evidence="1">ATPase subunit of a proteasome-like degradation complex; this subunit has chaperone activity. The binding of ATP and its subsequent hydrolysis by HslU are essential for unfolding of protein substrates subsequently hydrolyzed by HslV. HslU recognizes the N-terminal part of its protein substrates and unfolds these before they are guided to HslV for hydrolysis.</text>
</comment>
<comment type="subunit">
    <text evidence="1">A double ring-shaped homohexamer of HslV is capped on each side by a ring-shaped HslU homohexamer. The assembly of the HslU/HslV complex is dependent on binding of ATP.</text>
</comment>
<comment type="subcellular location">
    <subcellularLocation>
        <location evidence="1">Cytoplasm</location>
    </subcellularLocation>
</comment>
<comment type="similarity">
    <text evidence="1">Belongs to the ClpX chaperone family. HslU subfamily.</text>
</comment>
<feature type="chain" id="PRO_1000012823" description="ATP-dependent protease ATPase subunit HslU">
    <location>
        <begin position="1"/>
        <end position="466"/>
    </location>
</feature>
<feature type="binding site" evidence="1">
    <location>
        <position position="18"/>
    </location>
    <ligand>
        <name>ATP</name>
        <dbReference type="ChEBI" id="CHEBI:30616"/>
    </ligand>
</feature>
<feature type="binding site" evidence="1">
    <location>
        <begin position="60"/>
        <end position="65"/>
    </location>
    <ligand>
        <name>ATP</name>
        <dbReference type="ChEBI" id="CHEBI:30616"/>
    </ligand>
</feature>
<feature type="binding site" evidence="1">
    <location>
        <position position="279"/>
    </location>
    <ligand>
        <name>ATP</name>
        <dbReference type="ChEBI" id="CHEBI:30616"/>
    </ligand>
</feature>
<feature type="binding site" evidence="1">
    <location>
        <position position="344"/>
    </location>
    <ligand>
        <name>ATP</name>
        <dbReference type="ChEBI" id="CHEBI:30616"/>
    </ligand>
</feature>
<feature type="binding site" evidence="1">
    <location>
        <position position="416"/>
    </location>
    <ligand>
        <name>ATP</name>
        <dbReference type="ChEBI" id="CHEBI:30616"/>
    </ligand>
</feature>
<dbReference type="EMBL" id="CP000448">
    <property type="protein sequence ID" value="ABI68163.1"/>
    <property type="molecule type" value="Genomic_DNA"/>
</dbReference>
<dbReference type="RefSeq" id="WP_011640268.1">
    <property type="nucleotide sequence ID" value="NC_008346.1"/>
</dbReference>
<dbReference type="SMR" id="Q0AYP1"/>
<dbReference type="STRING" id="335541.Swol_0844"/>
<dbReference type="KEGG" id="swo:Swol_0844"/>
<dbReference type="eggNOG" id="COG1220">
    <property type="taxonomic scope" value="Bacteria"/>
</dbReference>
<dbReference type="HOGENOM" id="CLU_033123_0_0_9"/>
<dbReference type="OrthoDB" id="9804062at2"/>
<dbReference type="Proteomes" id="UP000001968">
    <property type="component" value="Chromosome"/>
</dbReference>
<dbReference type="GO" id="GO:0009376">
    <property type="term" value="C:HslUV protease complex"/>
    <property type="evidence" value="ECO:0007669"/>
    <property type="project" value="UniProtKB-UniRule"/>
</dbReference>
<dbReference type="GO" id="GO:0005524">
    <property type="term" value="F:ATP binding"/>
    <property type="evidence" value="ECO:0007669"/>
    <property type="project" value="UniProtKB-UniRule"/>
</dbReference>
<dbReference type="GO" id="GO:0016887">
    <property type="term" value="F:ATP hydrolysis activity"/>
    <property type="evidence" value="ECO:0007669"/>
    <property type="project" value="InterPro"/>
</dbReference>
<dbReference type="GO" id="GO:0008233">
    <property type="term" value="F:peptidase activity"/>
    <property type="evidence" value="ECO:0007669"/>
    <property type="project" value="InterPro"/>
</dbReference>
<dbReference type="GO" id="GO:0036402">
    <property type="term" value="F:proteasome-activating activity"/>
    <property type="evidence" value="ECO:0007669"/>
    <property type="project" value="UniProtKB-UniRule"/>
</dbReference>
<dbReference type="GO" id="GO:0043335">
    <property type="term" value="P:protein unfolding"/>
    <property type="evidence" value="ECO:0007669"/>
    <property type="project" value="UniProtKB-UniRule"/>
</dbReference>
<dbReference type="GO" id="GO:0051603">
    <property type="term" value="P:proteolysis involved in protein catabolic process"/>
    <property type="evidence" value="ECO:0007669"/>
    <property type="project" value="TreeGrafter"/>
</dbReference>
<dbReference type="CDD" id="cd19498">
    <property type="entry name" value="RecA-like_HslU"/>
    <property type="match status" value="1"/>
</dbReference>
<dbReference type="FunFam" id="3.40.50.300:FF:000220">
    <property type="entry name" value="ATP-dependent protease ATPase subunit HslU"/>
    <property type="match status" value="1"/>
</dbReference>
<dbReference type="Gene3D" id="1.10.8.60">
    <property type="match status" value="1"/>
</dbReference>
<dbReference type="Gene3D" id="3.40.50.300">
    <property type="entry name" value="P-loop containing nucleotide triphosphate hydrolases"/>
    <property type="match status" value="2"/>
</dbReference>
<dbReference type="HAMAP" id="MF_00249">
    <property type="entry name" value="HslU"/>
    <property type="match status" value="1"/>
</dbReference>
<dbReference type="InterPro" id="IPR003593">
    <property type="entry name" value="AAA+_ATPase"/>
</dbReference>
<dbReference type="InterPro" id="IPR050052">
    <property type="entry name" value="ATP-dep_Clp_protease_ClpX"/>
</dbReference>
<dbReference type="InterPro" id="IPR003959">
    <property type="entry name" value="ATPase_AAA_core"/>
</dbReference>
<dbReference type="InterPro" id="IPR019489">
    <property type="entry name" value="Clp_ATPase_C"/>
</dbReference>
<dbReference type="InterPro" id="IPR004491">
    <property type="entry name" value="HslU"/>
</dbReference>
<dbReference type="InterPro" id="IPR027417">
    <property type="entry name" value="P-loop_NTPase"/>
</dbReference>
<dbReference type="NCBIfam" id="TIGR00390">
    <property type="entry name" value="hslU"/>
    <property type="match status" value="1"/>
</dbReference>
<dbReference type="NCBIfam" id="NF003544">
    <property type="entry name" value="PRK05201.1"/>
    <property type="match status" value="1"/>
</dbReference>
<dbReference type="PANTHER" id="PTHR48102">
    <property type="entry name" value="ATP-DEPENDENT CLP PROTEASE ATP-BINDING SUBUNIT CLPX-LIKE, MITOCHONDRIAL-RELATED"/>
    <property type="match status" value="1"/>
</dbReference>
<dbReference type="PANTHER" id="PTHR48102:SF3">
    <property type="entry name" value="ATP-DEPENDENT PROTEASE ATPASE SUBUNIT HSLU"/>
    <property type="match status" value="1"/>
</dbReference>
<dbReference type="Pfam" id="PF00004">
    <property type="entry name" value="AAA"/>
    <property type="match status" value="1"/>
</dbReference>
<dbReference type="Pfam" id="PF07724">
    <property type="entry name" value="AAA_2"/>
    <property type="match status" value="1"/>
</dbReference>
<dbReference type="Pfam" id="PF10431">
    <property type="entry name" value="ClpB_D2-small"/>
    <property type="match status" value="1"/>
</dbReference>
<dbReference type="SMART" id="SM00382">
    <property type="entry name" value="AAA"/>
    <property type="match status" value="1"/>
</dbReference>
<dbReference type="SMART" id="SM01086">
    <property type="entry name" value="ClpB_D2-small"/>
    <property type="match status" value="1"/>
</dbReference>
<dbReference type="SUPFAM" id="SSF52540">
    <property type="entry name" value="P-loop containing nucleoside triphosphate hydrolases"/>
    <property type="match status" value="1"/>
</dbReference>
<gene>
    <name evidence="1" type="primary">hslU</name>
    <name type="ordered locus">Swol_0844</name>
</gene>
<sequence>MFKLTPREIVEELDKYIIGQQEAKKAVAIALRNRYRRKLLPDELREEIYPKNIIMIGSTGVGKTEIARRLARLVKAPFIKVEASKFTEVGYVGRDVDSMVRDLVETSIRLVKQEKMAAVEQKGRQMAEERIVDILLPFDGRKSKSPKNPFEFLLGSIQERDDVDDESERRRREIGQRREILRQKINRLELEDETIEIEVEEKNPSFMEIFSGSGVEEMGINLQDMLGNLMPRNKKKRKVSIAEARRILTYEESQRLLDMDEIHREGIKRAEEDGIIFLDEIDKIASKESNYGPDVSRGGVQRDILPIVEGSTVITKYGPARTDHVLFIAAGAFHVSKPSDLIPELQGRFPIRVELESLKKEDLKRILTEPNNSLIKQYIALLSTEKLTMDFTPEAIDYIAERAYEVNSRTEDIGARRLHTVMEKLLEDLLFNSPDMAGEKLVIDIDYVAERLDRIVEDEDLSRYIL</sequence>